<gene>
    <name evidence="2" type="primary">entr1</name>
    <name type="synonym">sdccag3</name>
    <name type="ORF">TEgg058n06.1</name>
</gene>
<feature type="chain" id="PRO_0000324288" description="Endosome-associated-trafficking regulator 1">
    <location>
        <begin position="1"/>
        <end position="346"/>
    </location>
</feature>
<feature type="region of interest" description="Disordered" evidence="4">
    <location>
        <begin position="46"/>
        <end position="77"/>
    </location>
</feature>
<feature type="region of interest" description="Disordered" evidence="4">
    <location>
        <begin position="93"/>
        <end position="129"/>
    </location>
</feature>
<feature type="region of interest" description="Disordered" evidence="4">
    <location>
        <begin position="153"/>
        <end position="173"/>
    </location>
</feature>
<feature type="coiled-coil region" evidence="3">
    <location>
        <begin position="170"/>
        <end position="317"/>
    </location>
</feature>
<feature type="compositionally biased region" description="Polar residues" evidence="4">
    <location>
        <begin position="46"/>
        <end position="67"/>
    </location>
</feature>
<reference key="1">
    <citation type="submission" date="2006-10" db="EMBL/GenBank/DDBJ databases">
        <authorList>
            <consortium name="Sanger Xenopus tropicalis EST/cDNA project"/>
        </authorList>
    </citation>
    <scope>NUCLEOTIDE SEQUENCE [LARGE SCALE MRNA]</scope>
    <source>
        <tissue>Egg</tissue>
    </source>
</reference>
<reference key="2">
    <citation type="submission" date="2008-01" db="EMBL/GenBank/DDBJ databases">
        <authorList>
            <consortium name="NIH - Xenopus Gene Collection (XGC) project"/>
        </authorList>
    </citation>
    <scope>NUCLEOTIDE SEQUENCE [LARGE SCALE MRNA]</scope>
</reference>
<keyword id="KW-0131">Cell cycle</keyword>
<keyword id="KW-0132">Cell division</keyword>
<keyword id="KW-0966">Cell projection</keyword>
<keyword id="KW-0970">Cilium biogenesis/degradation</keyword>
<keyword id="KW-0175">Coiled coil</keyword>
<keyword id="KW-0963">Cytoplasm</keyword>
<keyword id="KW-0206">Cytoskeleton</keyword>
<keyword id="KW-0967">Endosome</keyword>
<keyword id="KW-1185">Reference proteome</keyword>
<protein>
    <recommendedName>
        <fullName evidence="5">Endosome-associated-trafficking regulator 1</fullName>
    </recommendedName>
    <alternativeName>
        <fullName evidence="2">Serologically defined colon cancer antigen 3 homolog</fullName>
    </alternativeName>
</protein>
<comment type="function">
    <text evidence="1 2">Endosome-associated protein that plays a role in membrane receptor sorting, cytokinesis and ciliogenesis.</text>
</comment>
<comment type="subcellular location">
    <subcellularLocation>
        <location evidence="1">Cytoplasm</location>
    </subcellularLocation>
    <subcellularLocation>
        <location evidence="2">Early endosome</location>
    </subcellularLocation>
    <subcellularLocation>
        <location evidence="2">Endosome</location>
    </subcellularLocation>
    <subcellularLocation>
        <location evidence="2">Recycling endosome</location>
    </subcellularLocation>
    <subcellularLocation>
        <location evidence="2">Midbody</location>
    </subcellularLocation>
    <subcellularLocation>
        <location evidence="2">Cytoplasm</location>
        <location evidence="2">Cytoskeleton</location>
        <location evidence="2">Microtubule organizing center</location>
        <location evidence="2">Centrosome</location>
    </subcellularLocation>
    <subcellularLocation>
        <location evidence="2">Cytoplasm</location>
        <location evidence="2">Cytoskeleton</location>
        <location evidence="2">Cilium basal body</location>
    </subcellularLocation>
</comment>
<comment type="similarity">
    <text evidence="5">Belongs to the ENTR1 family.</text>
</comment>
<name>ENTR1_XENTR</name>
<evidence type="ECO:0000250" key="1">
    <source>
        <dbReference type="UniProtKB" id="A2AIW0"/>
    </source>
</evidence>
<evidence type="ECO:0000250" key="2">
    <source>
        <dbReference type="UniProtKB" id="Q96C92"/>
    </source>
</evidence>
<evidence type="ECO:0000255" key="3"/>
<evidence type="ECO:0000256" key="4">
    <source>
        <dbReference type="SAM" id="MobiDB-lite"/>
    </source>
</evidence>
<evidence type="ECO:0000305" key="5"/>
<sequence length="346" mass="38301">MSGSSKQPHAKGKTLIIEDDCEAEALDEANPFSFKEFVKSQTFPGFVSSNSKRAFSKDSNQSTTQFRGPSECPDGNLEFQETYFRDPTLYDDLQEDEDDDWSGSYHPSVIENTHGPKVPSPAGTDGDESYGYGASDMSGDGLITGWQQAVLPSPPAGLHGKTQHRPDSTSDSEEGLRLLQINCEELQEENLHLKSKICKLKELNDSQNEKVRQLERKLEERILEEQKEAQDLESMVQQVEKNLQMMTKRAAKAEGNVTKLKQEMALLQIELTTYKAENEALRRGETAGMNAVKQNSNLALENLQKVVSGAQSSIKQLVAGAEALTLVAELLRSIDKIAEIHNDGVP</sequence>
<organism>
    <name type="scientific">Xenopus tropicalis</name>
    <name type="common">Western clawed frog</name>
    <name type="synonym">Silurana tropicalis</name>
    <dbReference type="NCBI Taxonomy" id="8364"/>
    <lineage>
        <taxon>Eukaryota</taxon>
        <taxon>Metazoa</taxon>
        <taxon>Chordata</taxon>
        <taxon>Craniata</taxon>
        <taxon>Vertebrata</taxon>
        <taxon>Euteleostomi</taxon>
        <taxon>Amphibia</taxon>
        <taxon>Batrachia</taxon>
        <taxon>Anura</taxon>
        <taxon>Pipoidea</taxon>
        <taxon>Pipidae</taxon>
        <taxon>Xenopodinae</taxon>
        <taxon>Xenopus</taxon>
        <taxon>Silurana</taxon>
    </lineage>
</organism>
<accession>Q28GJ0</accession>
<proteinExistence type="evidence at transcript level"/>
<dbReference type="EMBL" id="CR761370">
    <property type="protein sequence ID" value="CAJ81711.1"/>
    <property type="molecule type" value="mRNA"/>
</dbReference>
<dbReference type="EMBL" id="BC158294">
    <property type="protein sequence ID" value="AAI58295.1"/>
    <property type="molecule type" value="mRNA"/>
</dbReference>
<dbReference type="RefSeq" id="NP_001037937.1">
    <property type="nucleotide sequence ID" value="NM_001044472.1"/>
</dbReference>
<dbReference type="SMR" id="Q28GJ0"/>
<dbReference type="FunCoup" id="Q28GJ0">
    <property type="interactions" value="1669"/>
</dbReference>
<dbReference type="STRING" id="8364.ENSXETP00000052546"/>
<dbReference type="PaxDb" id="8364-ENSXETP00000001653"/>
<dbReference type="GeneID" id="733560"/>
<dbReference type="KEGG" id="xtr:733560"/>
<dbReference type="AGR" id="Xenbase:XB-GENE-986419"/>
<dbReference type="CTD" id="10807"/>
<dbReference type="Xenbase" id="XB-GENE-986419">
    <property type="gene designation" value="entr1"/>
</dbReference>
<dbReference type="eggNOG" id="ENOG502QUJK">
    <property type="taxonomic scope" value="Eukaryota"/>
</dbReference>
<dbReference type="HOGENOM" id="CLU_051353_0_0_1"/>
<dbReference type="InParanoid" id="Q28GJ0"/>
<dbReference type="OMA" id="WSGSYHP"/>
<dbReference type="OrthoDB" id="6499155at2759"/>
<dbReference type="PhylomeDB" id="Q28GJ0"/>
<dbReference type="TreeFam" id="TF335840"/>
<dbReference type="Proteomes" id="UP000008143">
    <property type="component" value="Chromosome 8"/>
</dbReference>
<dbReference type="Bgee" id="ENSXETG00000000747">
    <property type="expression patterns" value="Expressed in 2-cell stage embryo and 12 other cell types or tissues"/>
</dbReference>
<dbReference type="GO" id="GO:0005813">
    <property type="term" value="C:centrosome"/>
    <property type="evidence" value="ECO:0000250"/>
    <property type="project" value="UniProtKB"/>
</dbReference>
<dbReference type="GO" id="GO:0036064">
    <property type="term" value="C:ciliary basal body"/>
    <property type="evidence" value="ECO:0000250"/>
    <property type="project" value="UniProtKB"/>
</dbReference>
<dbReference type="GO" id="GO:0005769">
    <property type="term" value="C:early endosome"/>
    <property type="evidence" value="ECO:0007669"/>
    <property type="project" value="UniProtKB-SubCell"/>
</dbReference>
<dbReference type="GO" id="GO:0030496">
    <property type="term" value="C:midbody"/>
    <property type="evidence" value="ECO:0007669"/>
    <property type="project" value="UniProtKB-SubCell"/>
</dbReference>
<dbReference type="GO" id="GO:0055037">
    <property type="term" value="C:recycling endosome"/>
    <property type="evidence" value="ECO:0007669"/>
    <property type="project" value="UniProtKB-SubCell"/>
</dbReference>
<dbReference type="GO" id="GO:0051301">
    <property type="term" value="P:cell division"/>
    <property type="evidence" value="ECO:0007669"/>
    <property type="project" value="UniProtKB-KW"/>
</dbReference>
<dbReference type="GO" id="GO:0030030">
    <property type="term" value="P:cell projection organization"/>
    <property type="evidence" value="ECO:0007669"/>
    <property type="project" value="UniProtKB-KW"/>
</dbReference>
<dbReference type="GO" id="GO:0045724">
    <property type="term" value="P:positive regulation of cilium assembly"/>
    <property type="evidence" value="ECO:0000250"/>
    <property type="project" value="UniProtKB"/>
</dbReference>
<dbReference type="GO" id="GO:1903566">
    <property type="term" value="P:positive regulation of protein localization to cilium"/>
    <property type="evidence" value="ECO:0000250"/>
    <property type="project" value="UniProtKB"/>
</dbReference>
<dbReference type="InterPro" id="IPR026757">
    <property type="entry name" value="ENTR1"/>
</dbReference>
<dbReference type="PANTHER" id="PTHR31259">
    <property type="entry name" value="ENDOSOME-ASSOCIATED TRAFFICKING REGULATOR 1"/>
    <property type="match status" value="1"/>
</dbReference>
<dbReference type="PANTHER" id="PTHR31259:SF3">
    <property type="entry name" value="ENDOSOME-ASSOCIATED-TRAFFICKING REGULATOR 1"/>
    <property type="match status" value="1"/>
</dbReference>